<feature type="chain" id="PRO_1000147513" description="Bifunctional protein FolD">
    <location>
        <begin position="1"/>
        <end position="289"/>
    </location>
</feature>
<feature type="binding site" evidence="1">
    <location>
        <begin position="165"/>
        <end position="167"/>
    </location>
    <ligand>
        <name>NADP(+)</name>
        <dbReference type="ChEBI" id="CHEBI:58349"/>
    </ligand>
</feature>
<feature type="binding site" evidence="1">
    <location>
        <position position="190"/>
    </location>
    <ligand>
        <name>NADP(+)</name>
        <dbReference type="ChEBI" id="CHEBI:58349"/>
    </ligand>
</feature>
<reference key="1">
    <citation type="submission" date="2008-05" db="EMBL/GenBank/DDBJ databases">
        <title>Complete sequence of chromosome 1 of Ralstonia pickettii 12J.</title>
        <authorList>
            <person name="Lucas S."/>
            <person name="Copeland A."/>
            <person name="Lapidus A."/>
            <person name="Glavina del Rio T."/>
            <person name="Dalin E."/>
            <person name="Tice H."/>
            <person name="Bruce D."/>
            <person name="Goodwin L."/>
            <person name="Pitluck S."/>
            <person name="Meincke L."/>
            <person name="Brettin T."/>
            <person name="Detter J.C."/>
            <person name="Han C."/>
            <person name="Kuske C.R."/>
            <person name="Schmutz J."/>
            <person name="Larimer F."/>
            <person name="Land M."/>
            <person name="Hauser L."/>
            <person name="Kyrpides N."/>
            <person name="Mikhailova N."/>
            <person name="Marsh T."/>
            <person name="Richardson P."/>
        </authorList>
    </citation>
    <scope>NUCLEOTIDE SEQUENCE [LARGE SCALE GENOMIC DNA]</scope>
    <source>
        <strain>12J</strain>
    </source>
</reference>
<dbReference type="EC" id="1.5.1.5" evidence="1"/>
<dbReference type="EC" id="3.5.4.9" evidence="1"/>
<dbReference type="EMBL" id="CP001068">
    <property type="protein sequence ID" value="ACD27085.1"/>
    <property type="molecule type" value="Genomic_DNA"/>
</dbReference>
<dbReference type="SMR" id="B2UFY4"/>
<dbReference type="STRING" id="402626.Rpic_1950"/>
<dbReference type="KEGG" id="rpi:Rpic_1950"/>
<dbReference type="eggNOG" id="COG0190">
    <property type="taxonomic scope" value="Bacteria"/>
</dbReference>
<dbReference type="HOGENOM" id="CLU_034045_2_1_4"/>
<dbReference type="UniPathway" id="UPA00193"/>
<dbReference type="GO" id="GO:0005829">
    <property type="term" value="C:cytosol"/>
    <property type="evidence" value="ECO:0007669"/>
    <property type="project" value="TreeGrafter"/>
</dbReference>
<dbReference type="GO" id="GO:0004477">
    <property type="term" value="F:methenyltetrahydrofolate cyclohydrolase activity"/>
    <property type="evidence" value="ECO:0007669"/>
    <property type="project" value="UniProtKB-UniRule"/>
</dbReference>
<dbReference type="GO" id="GO:0004488">
    <property type="term" value="F:methylenetetrahydrofolate dehydrogenase (NADP+) activity"/>
    <property type="evidence" value="ECO:0007669"/>
    <property type="project" value="UniProtKB-UniRule"/>
</dbReference>
<dbReference type="GO" id="GO:0000105">
    <property type="term" value="P:L-histidine biosynthetic process"/>
    <property type="evidence" value="ECO:0007669"/>
    <property type="project" value="UniProtKB-KW"/>
</dbReference>
<dbReference type="GO" id="GO:0009086">
    <property type="term" value="P:methionine biosynthetic process"/>
    <property type="evidence" value="ECO:0007669"/>
    <property type="project" value="UniProtKB-KW"/>
</dbReference>
<dbReference type="GO" id="GO:0006164">
    <property type="term" value="P:purine nucleotide biosynthetic process"/>
    <property type="evidence" value="ECO:0007669"/>
    <property type="project" value="UniProtKB-KW"/>
</dbReference>
<dbReference type="GO" id="GO:0035999">
    <property type="term" value="P:tetrahydrofolate interconversion"/>
    <property type="evidence" value="ECO:0007669"/>
    <property type="project" value="UniProtKB-UniRule"/>
</dbReference>
<dbReference type="CDD" id="cd01080">
    <property type="entry name" value="NAD_bind_m-THF_DH_Cyclohyd"/>
    <property type="match status" value="1"/>
</dbReference>
<dbReference type="FunFam" id="3.40.50.720:FF:000094">
    <property type="entry name" value="Bifunctional protein FolD"/>
    <property type="match status" value="1"/>
</dbReference>
<dbReference type="FunFam" id="3.40.50.10860:FF:000005">
    <property type="entry name" value="C-1-tetrahydrofolate synthase, cytoplasmic, putative"/>
    <property type="match status" value="1"/>
</dbReference>
<dbReference type="Gene3D" id="3.40.50.10860">
    <property type="entry name" value="Leucine Dehydrogenase, chain A, domain 1"/>
    <property type="match status" value="1"/>
</dbReference>
<dbReference type="Gene3D" id="3.40.50.720">
    <property type="entry name" value="NAD(P)-binding Rossmann-like Domain"/>
    <property type="match status" value="1"/>
</dbReference>
<dbReference type="HAMAP" id="MF_01576">
    <property type="entry name" value="THF_DHG_CYH"/>
    <property type="match status" value="1"/>
</dbReference>
<dbReference type="InterPro" id="IPR046346">
    <property type="entry name" value="Aminoacid_DH-like_N_sf"/>
</dbReference>
<dbReference type="InterPro" id="IPR036291">
    <property type="entry name" value="NAD(P)-bd_dom_sf"/>
</dbReference>
<dbReference type="InterPro" id="IPR000672">
    <property type="entry name" value="THF_DH/CycHdrlase"/>
</dbReference>
<dbReference type="InterPro" id="IPR020630">
    <property type="entry name" value="THF_DH/CycHdrlase_cat_dom"/>
</dbReference>
<dbReference type="InterPro" id="IPR020867">
    <property type="entry name" value="THF_DH/CycHdrlase_CS"/>
</dbReference>
<dbReference type="InterPro" id="IPR020631">
    <property type="entry name" value="THF_DH/CycHdrlase_NAD-bd_dom"/>
</dbReference>
<dbReference type="NCBIfam" id="NF008058">
    <property type="entry name" value="PRK10792.1"/>
    <property type="match status" value="1"/>
</dbReference>
<dbReference type="NCBIfam" id="NF010783">
    <property type="entry name" value="PRK14186.1"/>
    <property type="match status" value="1"/>
</dbReference>
<dbReference type="NCBIfam" id="NF010786">
    <property type="entry name" value="PRK14189.1"/>
    <property type="match status" value="1"/>
</dbReference>
<dbReference type="PANTHER" id="PTHR48099:SF5">
    <property type="entry name" value="C-1-TETRAHYDROFOLATE SYNTHASE, CYTOPLASMIC"/>
    <property type="match status" value="1"/>
</dbReference>
<dbReference type="PANTHER" id="PTHR48099">
    <property type="entry name" value="C-1-TETRAHYDROFOLATE SYNTHASE, CYTOPLASMIC-RELATED"/>
    <property type="match status" value="1"/>
</dbReference>
<dbReference type="Pfam" id="PF00763">
    <property type="entry name" value="THF_DHG_CYH"/>
    <property type="match status" value="1"/>
</dbReference>
<dbReference type="Pfam" id="PF02882">
    <property type="entry name" value="THF_DHG_CYH_C"/>
    <property type="match status" value="1"/>
</dbReference>
<dbReference type="PRINTS" id="PR00085">
    <property type="entry name" value="THFDHDRGNASE"/>
</dbReference>
<dbReference type="SUPFAM" id="SSF53223">
    <property type="entry name" value="Aminoacid dehydrogenase-like, N-terminal domain"/>
    <property type="match status" value="1"/>
</dbReference>
<dbReference type="SUPFAM" id="SSF51735">
    <property type="entry name" value="NAD(P)-binding Rossmann-fold domains"/>
    <property type="match status" value="1"/>
</dbReference>
<dbReference type="PROSITE" id="PS00766">
    <property type="entry name" value="THF_DHG_CYH_1"/>
    <property type="match status" value="1"/>
</dbReference>
<dbReference type="PROSITE" id="PS00767">
    <property type="entry name" value="THF_DHG_CYH_2"/>
    <property type="match status" value="1"/>
</dbReference>
<sequence length="289" mass="30291">MTAQLIDGNALAKQLRAEAAQRAAALTARGHQPGLAVILVGEDPASQVYVRNKIKACEDNGFLSSFDRYPADLSEADLLGRIDALNRDPRIHGILVQLPLPKHIDSHKVLEAIAPEKDVDGFHVANAGALMTGAPLFRPCTPYGCMKMLESINYPVRGANAVVVGASNIVGKPMAMLLLQSGATITICNSKTRDLAAHTREADIIVAAVGRRNIITADMVKPGAVVIDVGMNRDDAGKLCGDVDFAGVKEVAGYITPVPGGVGPMTITMLLINTLEAAERAAEGAALAA</sequence>
<name>FOLD_RALPJ</name>
<proteinExistence type="inferred from homology"/>
<gene>
    <name evidence="1" type="primary">folD</name>
    <name type="ordered locus">Rpic_1950</name>
</gene>
<evidence type="ECO:0000255" key="1">
    <source>
        <dbReference type="HAMAP-Rule" id="MF_01576"/>
    </source>
</evidence>
<accession>B2UFY4</accession>
<keyword id="KW-0028">Amino-acid biosynthesis</keyword>
<keyword id="KW-0368">Histidine biosynthesis</keyword>
<keyword id="KW-0378">Hydrolase</keyword>
<keyword id="KW-0486">Methionine biosynthesis</keyword>
<keyword id="KW-0511">Multifunctional enzyme</keyword>
<keyword id="KW-0521">NADP</keyword>
<keyword id="KW-0554">One-carbon metabolism</keyword>
<keyword id="KW-0560">Oxidoreductase</keyword>
<keyword id="KW-0658">Purine biosynthesis</keyword>
<organism>
    <name type="scientific">Ralstonia pickettii (strain 12J)</name>
    <dbReference type="NCBI Taxonomy" id="402626"/>
    <lineage>
        <taxon>Bacteria</taxon>
        <taxon>Pseudomonadati</taxon>
        <taxon>Pseudomonadota</taxon>
        <taxon>Betaproteobacteria</taxon>
        <taxon>Burkholderiales</taxon>
        <taxon>Burkholderiaceae</taxon>
        <taxon>Ralstonia</taxon>
    </lineage>
</organism>
<comment type="function">
    <text evidence="1">Catalyzes the oxidation of 5,10-methylenetetrahydrofolate to 5,10-methenyltetrahydrofolate and then the hydrolysis of 5,10-methenyltetrahydrofolate to 10-formyltetrahydrofolate.</text>
</comment>
<comment type="catalytic activity">
    <reaction evidence="1">
        <text>(6R)-5,10-methylene-5,6,7,8-tetrahydrofolate + NADP(+) = (6R)-5,10-methenyltetrahydrofolate + NADPH</text>
        <dbReference type="Rhea" id="RHEA:22812"/>
        <dbReference type="ChEBI" id="CHEBI:15636"/>
        <dbReference type="ChEBI" id="CHEBI:57455"/>
        <dbReference type="ChEBI" id="CHEBI:57783"/>
        <dbReference type="ChEBI" id="CHEBI:58349"/>
        <dbReference type="EC" id="1.5.1.5"/>
    </reaction>
</comment>
<comment type="catalytic activity">
    <reaction evidence="1">
        <text>(6R)-5,10-methenyltetrahydrofolate + H2O = (6R)-10-formyltetrahydrofolate + H(+)</text>
        <dbReference type="Rhea" id="RHEA:23700"/>
        <dbReference type="ChEBI" id="CHEBI:15377"/>
        <dbReference type="ChEBI" id="CHEBI:15378"/>
        <dbReference type="ChEBI" id="CHEBI:57455"/>
        <dbReference type="ChEBI" id="CHEBI:195366"/>
        <dbReference type="EC" id="3.5.4.9"/>
    </reaction>
</comment>
<comment type="pathway">
    <text evidence="1">One-carbon metabolism; tetrahydrofolate interconversion.</text>
</comment>
<comment type="subunit">
    <text evidence="1">Homodimer.</text>
</comment>
<comment type="similarity">
    <text evidence="1">Belongs to the tetrahydrofolate dehydrogenase/cyclohydrolase family.</text>
</comment>
<protein>
    <recommendedName>
        <fullName evidence="1">Bifunctional protein FolD</fullName>
    </recommendedName>
    <domain>
        <recommendedName>
            <fullName evidence="1">Methylenetetrahydrofolate dehydrogenase</fullName>
            <ecNumber evidence="1">1.5.1.5</ecNumber>
        </recommendedName>
    </domain>
    <domain>
        <recommendedName>
            <fullName evidence="1">Methenyltetrahydrofolate cyclohydrolase</fullName>
            <ecNumber evidence="1">3.5.4.9</ecNumber>
        </recommendedName>
    </domain>
</protein>